<evidence type="ECO:0000255" key="1">
    <source>
        <dbReference type="HAMAP-Rule" id="MF_00197"/>
    </source>
</evidence>
<proteinExistence type="evidence at protein level"/>
<feature type="chain" id="PRO_0000149859" description="Diaminopimelate epimerase">
    <location>
        <begin position="1"/>
        <end position="276"/>
    </location>
</feature>
<feature type="active site" description="Proton donor" evidence="1">
    <location>
        <position position="75"/>
    </location>
</feature>
<feature type="active site" description="Proton acceptor" evidence="1">
    <location>
        <position position="219"/>
    </location>
</feature>
<feature type="binding site" evidence="1">
    <location>
        <position position="13"/>
    </location>
    <ligand>
        <name>substrate</name>
    </ligand>
</feature>
<feature type="binding site" evidence="1">
    <location>
        <position position="46"/>
    </location>
    <ligand>
        <name>substrate</name>
    </ligand>
</feature>
<feature type="binding site" evidence="1">
    <location>
        <position position="66"/>
    </location>
    <ligand>
        <name>substrate</name>
    </ligand>
</feature>
<feature type="binding site" evidence="1">
    <location>
        <begin position="76"/>
        <end position="77"/>
    </location>
    <ligand>
        <name>substrate</name>
    </ligand>
</feature>
<feature type="binding site" evidence="1">
    <location>
        <position position="159"/>
    </location>
    <ligand>
        <name>substrate</name>
    </ligand>
</feature>
<feature type="binding site" evidence="1">
    <location>
        <position position="192"/>
    </location>
    <ligand>
        <name>substrate</name>
    </ligand>
</feature>
<feature type="binding site" evidence="1">
    <location>
        <begin position="210"/>
        <end position="211"/>
    </location>
    <ligand>
        <name>substrate</name>
    </ligand>
</feature>
<feature type="binding site" evidence="1">
    <location>
        <begin position="220"/>
        <end position="221"/>
    </location>
    <ligand>
        <name>substrate</name>
    </ligand>
</feature>
<feature type="site" description="Could be important to modulate the pK values of the two catalytic cysteine residues" evidence="1">
    <location>
        <position position="161"/>
    </location>
</feature>
<feature type="site" description="Could be important to modulate the pK values of the two catalytic cysteine residues" evidence="1">
    <location>
        <position position="210"/>
    </location>
</feature>
<feature type="site" description="Important for dimerization" evidence="1">
    <location>
        <position position="270"/>
    </location>
</feature>
<protein>
    <recommendedName>
        <fullName evidence="1">Diaminopimelate epimerase</fullName>
        <shortName evidence="1">DAP epimerase</shortName>
        <ecNumber evidence="1">5.1.1.7</ecNumber>
    </recommendedName>
    <alternativeName>
        <fullName evidence="1">PLP-independent amino acid racemase</fullName>
    </alternativeName>
</protein>
<gene>
    <name evidence="1" type="primary">dapF</name>
    <name type="ordered locus">PA5278</name>
</gene>
<name>DAPF_PSEAE</name>
<accession>Q51564</accession>
<sequence length="276" mass="30320">MLLRFTKMHGLGNDFMVLDLVSQHAHVQPKHVKLWGDRNTGIGFDQLLIVEAPSSPDVDFRYRIFNADGSEVEQCGNGARCFARFVQDKRLTVKKSIRVETKGGIIELNIRPDGQVTVDMGPPRLAPAEIPFQAEREALSYEIEVNGQRVELAAVSMGNPHGVLRVENVDSAPVHSLGPQLEVHPRFPKKANIGFLQVLDPHHARLRVWERGVGETQACGTGACAAAVAGIRQGWLQSPVQIDLPGGRLHIEWAGPGQPVMMTGPAVRVYEGQVRL</sequence>
<comment type="function">
    <text evidence="1">Catalyzes the stereoinversion of LL-2,6-diaminopimelate (L,L-DAP) to meso-diaminopimelate (meso-DAP), a precursor of L-lysine and an essential component of the bacterial peptidoglycan.</text>
</comment>
<comment type="catalytic activity">
    <reaction evidence="1">
        <text>(2S,6S)-2,6-diaminopimelate = meso-2,6-diaminopimelate</text>
        <dbReference type="Rhea" id="RHEA:15393"/>
        <dbReference type="ChEBI" id="CHEBI:57609"/>
        <dbReference type="ChEBI" id="CHEBI:57791"/>
        <dbReference type="EC" id="5.1.1.7"/>
    </reaction>
</comment>
<comment type="pathway">
    <text evidence="1">Amino-acid biosynthesis; L-lysine biosynthesis via DAP pathway; DL-2,6-diaminopimelate from LL-2,6-diaminopimelate: step 1/1.</text>
</comment>
<comment type="subunit">
    <text evidence="1">Homodimer.</text>
</comment>
<comment type="subcellular location">
    <subcellularLocation>
        <location evidence="1">Cytoplasm</location>
    </subcellularLocation>
</comment>
<comment type="similarity">
    <text evidence="1">Belongs to the diaminopimelate epimerase family.</text>
</comment>
<organism>
    <name type="scientific">Pseudomonas aeruginosa (strain ATCC 15692 / DSM 22644 / CIP 104116 / JCM 14847 / LMG 12228 / 1C / PRS 101 / PAO1)</name>
    <dbReference type="NCBI Taxonomy" id="208964"/>
    <lineage>
        <taxon>Bacteria</taxon>
        <taxon>Pseudomonadati</taxon>
        <taxon>Pseudomonadota</taxon>
        <taxon>Gammaproteobacteria</taxon>
        <taxon>Pseudomonadales</taxon>
        <taxon>Pseudomonadaceae</taxon>
        <taxon>Pseudomonas</taxon>
    </lineage>
</organism>
<keyword id="KW-0002">3D-structure</keyword>
<keyword id="KW-0028">Amino-acid biosynthesis</keyword>
<keyword id="KW-0963">Cytoplasm</keyword>
<keyword id="KW-0413">Isomerase</keyword>
<keyword id="KW-0457">Lysine biosynthesis</keyword>
<keyword id="KW-1185">Reference proteome</keyword>
<dbReference type="EC" id="5.1.1.7" evidence="1"/>
<dbReference type="EMBL" id="AE004091">
    <property type="protein sequence ID" value="AAG08663.1"/>
    <property type="molecule type" value="Genomic_DNA"/>
</dbReference>
<dbReference type="EMBL" id="X78478">
    <property type="protein sequence ID" value="CAA55224.1"/>
    <property type="molecule type" value="Genomic_DNA"/>
</dbReference>
<dbReference type="PIR" id="G82986">
    <property type="entry name" value="G82986"/>
</dbReference>
<dbReference type="PIR" id="S61400">
    <property type="entry name" value="S43154"/>
</dbReference>
<dbReference type="RefSeq" id="NP_253965.1">
    <property type="nucleotide sequence ID" value="NC_002516.2"/>
</dbReference>
<dbReference type="RefSeq" id="WP_003114344.1">
    <property type="nucleotide sequence ID" value="NZ_QZGE01000020.1"/>
</dbReference>
<dbReference type="PDB" id="8QZY">
    <property type="method" value="X-ray"/>
    <property type="resolution" value="1.69 A"/>
    <property type="chains" value="A/B=1-276"/>
</dbReference>
<dbReference type="PDBsum" id="8QZY"/>
<dbReference type="SMR" id="Q51564"/>
<dbReference type="FunCoup" id="Q51564">
    <property type="interactions" value="737"/>
</dbReference>
<dbReference type="STRING" id="208964.PA5278"/>
<dbReference type="PaxDb" id="208964-PA5278"/>
<dbReference type="DNASU" id="877750"/>
<dbReference type="GeneID" id="877750"/>
<dbReference type="KEGG" id="pae:PA5278"/>
<dbReference type="PATRIC" id="fig|208964.12.peg.5532"/>
<dbReference type="PseudoCAP" id="PA5278"/>
<dbReference type="HOGENOM" id="CLU_053306_1_1_6"/>
<dbReference type="InParanoid" id="Q51564"/>
<dbReference type="OrthoDB" id="9805408at2"/>
<dbReference type="PhylomeDB" id="Q51564"/>
<dbReference type="BioCyc" id="PAER208964:G1FZ6-5399-MONOMER"/>
<dbReference type="UniPathway" id="UPA00034">
    <property type="reaction ID" value="UER00025"/>
</dbReference>
<dbReference type="Proteomes" id="UP000002438">
    <property type="component" value="Chromosome"/>
</dbReference>
<dbReference type="GO" id="GO:0005829">
    <property type="term" value="C:cytosol"/>
    <property type="evidence" value="ECO:0000318"/>
    <property type="project" value="GO_Central"/>
</dbReference>
<dbReference type="GO" id="GO:0008837">
    <property type="term" value="F:diaminopimelate epimerase activity"/>
    <property type="evidence" value="ECO:0000250"/>
    <property type="project" value="PseudoCAP"/>
</dbReference>
<dbReference type="GO" id="GO:0009089">
    <property type="term" value="P:lysine biosynthetic process via diaminopimelate"/>
    <property type="evidence" value="ECO:0000318"/>
    <property type="project" value="GO_Central"/>
</dbReference>
<dbReference type="FunFam" id="3.10.310.10:FF:000001">
    <property type="entry name" value="Diaminopimelate epimerase"/>
    <property type="match status" value="1"/>
</dbReference>
<dbReference type="FunFam" id="3.10.310.10:FF:000002">
    <property type="entry name" value="Diaminopimelate epimerase"/>
    <property type="match status" value="1"/>
</dbReference>
<dbReference type="Gene3D" id="3.10.310.10">
    <property type="entry name" value="Diaminopimelate Epimerase, Chain A, domain 1"/>
    <property type="match status" value="2"/>
</dbReference>
<dbReference type="HAMAP" id="MF_00197">
    <property type="entry name" value="DAP_epimerase"/>
    <property type="match status" value="1"/>
</dbReference>
<dbReference type="InterPro" id="IPR018510">
    <property type="entry name" value="DAP_epimerase_AS"/>
</dbReference>
<dbReference type="InterPro" id="IPR001653">
    <property type="entry name" value="DAP_epimerase_DapF"/>
</dbReference>
<dbReference type="NCBIfam" id="TIGR00652">
    <property type="entry name" value="DapF"/>
    <property type="match status" value="1"/>
</dbReference>
<dbReference type="PANTHER" id="PTHR31689:SF0">
    <property type="entry name" value="DIAMINOPIMELATE EPIMERASE"/>
    <property type="match status" value="1"/>
</dbReference>
<dbReference type="PANTHER" id="PTHR31689">
    <property type="entry name" value="DIAMINOPIMELATE EPIMERASE, CHLOROPLASTIC"/>
    <property type="match status" value="1"/>
</dbReference>
<dbReference type="Pfam" id="PF01678">
    <property type="entry name" value="DAP_epimerase"/>
    <property type="match status" value="2"/>
</dbReference>
<dbReference type="SUPFAM" id="SSF54506">
    <property type="entry name" value="Diaminopimelate epimerase-like"/>
    <property type="match status" value="1"/>
</dbReference>
<dbReference type="PROSITE" id="PS01326">
    <property type="entry name" value="DAP_EPIMERASE"/>
    <property type="match status" value="1"/>
</dbReference>
<reference key="1">
    <citation type="journal article" date="2000" name="Nature">
        <title>Complete genome sequence of Pseudomonas aeruginosa PAO1, an opportunistic pathogen.</title>
        <authorList>
            <person name="Stover C.K."/>
            <person name="Pham X.-Q.T."/>
            <person name="Erwin A.L."/>
            <person name="Mizoguchi S.D."/>
            <person name="Warrener P."/>
            <person name="Hickey M.J."/>
            <person name="Brinkman F.S.L."/>
            <person name="Hufnagle W.O."/>
            <person name="Kowalik D.J."/>
            <person name="Lagrou M."/>
            <person name="Garber R.L."/>
            <person name="Goltry L."/>
            <person name="Tolentino E."/>
            <person name="Westbrock-Wadman S."/>
            <person name="Yuan Y."/>
            <person name="Brody L.L."/>
            <person name="Coulter S.N."/>
            <person name="Folger K.R."/>
            <person name="Kas A."/>
            <person name="Larbig K."/>
            <person name="Lim R.M."/>
            <person name="Smith K.A."/>
            <person name="Spencer D.H."/>
            <person name="Wong G.K.-S."/>
            <person name="Wu Z."/>
            <person name="Paulsen I.T."/>
            <person name="Reizer J."/>
            <person name="Saier M.H. Jr."/>
            <person name="Hancock R.E.W."/>
            <person name="Lory S."/>
            <person name="Olson M.V."/>
        </authorList>
    </citation>
    <scope>NUCLEOTIDE SEQUENCE [LARGE SCALE GENOMIC DNA]</scope>
    <source>
        <strain>ATCC 15692 / DSM 22644 / CIP 104116 / JCM 14847 / LMG 12228 / 1C / PRS 101 / PAO1</strain>
    </source>
</reference>
<reference key="2">
    <citation type="journal article" date="1994" name="Mol. Microbiol.">
        <title>The sss gene product, which affects pyoverdin production in Pseudomonas aeruginosa 7NSK2, is a site-specific recombinase.</title>
        <authorList>
            <person name="Hoefte M."/>
            <person name="Dong Q."/>
            <person name="Kourambas S."/>
            <person name="Krishnapillai V."/>
            <person name="Sherratt D.J."/>
            <person name="Mergeay M."/>
        </authorList>
    </citation>
    <scope>NUCLEOTIDE SEQUENCE [GENOMIC DNA] OF 169-276</scope>
    <source>
        <strain>7NSK2</strain>
    </source>
</reference>